<keyword id="KW-0963">Cytoplasm</keyword>
<keyword id="KW-0378">Hydrolase</keyword>
<keyword id="KW-1185">Reference proteome</keyword>
<keyword id="KW-0719">Serine esterase</keyword>
<accession>B2U4S9</accession>
<evidence type="ECO:0000250" key="1">
    <source>
        <dbReference type="UniProtKB" id="Q5NUF3"/>
    </source>
</evidence>
<evidence type="ECO:0000255" key="2">
    <source>
        <dbReference type="HAMAP-Rule" id="MF_01958"/>
    </source>
</evidence>
<sequence length="319" mass="36062">MKPENKLPVLDLISAEMKTVVNTLQPDLPSWPATGTIAEQRQYYTLERRFWNAGAPEMATRAYMVPTKYGQVETRLFCPQPDSPATLFYLHGGGFILGNLDTHDRIMRLLASYSQCTVIGIDYPLSPEARFPQAIEEIVAACCYFHQQAEDYQINMSRIGFAGDSAGAMLALASALWLRDKQIDCGKIAGVLLWYGLYGLRDSVTRRLLGGVWDGLTQQDLQMYEEAYLSNDADRESPYYCLFNNDLTREVPPCFIAGAEFDPLLDDSRLLYQTLAAHQQPCEFKLYPGTLHVFLHYSRMMKTADEALRDGAQFFTAQL</sequence>
<dbReference type="EC" id="3.1.1.-" evidence="2"/>
<dbReference type="EMBL" id="CP001063">
    <property type="protein sequence ID" value="ACD08288.1"/>
    <property type="molecule type" value="Genomic_DNA"/>
</dbReference>
<dbReference type="RefSeq" id="WP_000801833.1">
    <property type="nucleotide sequence ID" value="NC_010658.1"/>
</dbReference>
<dbReference type="SMR" id="B2U4S9"/>
<dbReference type="STRING" id="344609.SbBS512_E0407"/>
<dbReference type="ESTHER" id="shifl-AES">
    <property type="family name" value="Acetyl_esterase"/>
</dbReference>
<dbReference type="MEROPS" id="S09.A47"/>
<dbReference type="KEGG" id="sbc:SbBS512_E0407"/>
<dbReference type="HOGENOM" id="CLU_012494_6_4_6"/>
<dbReference type="Proteomes" id="UP000001030">
    <property type="component" value="Chromosome"/>
</dbReference>
<dbReference type="GO" id="GO:0005737">
    <property type="term" value="C:cytoplasm"/>
    <property type="evidence" value="ECO:0007669"/>
    <property type="project" value="UniProtKB-SubCell"/>
</dbReference>
<dbReference type="GO" id="GO:0052689">
    <property type="term" value="F:carboxylic ester hydrolase activity"/>
    <property type="evidence" value="ECO:0007669"/>
    <property type="project" value="UniProtKB-UniRule"/>
</dbReference>
<dbReference type="FunFam" id="3.40.50.1820:FF:000035">
    <property type="entry name" value="Acetyl esterase"/>
    <property type="match status" value="1"/>
</dbReference>
<dbReference type="Gene3D" id="3.40.50.1820">
    <property type="entry name" value="alpha/beta hydrolase"/>
    <property type="match status" value="1"/>
</dbReference>
<dbReference type="HAMAP" id="MF_01958">
    <property type="entry name" value="Acetyl_esterase"/>
    <property type="match status" value="1"/>
</dbReference>
<dbReference type="InterPro" id="IPR013094">
    <property type="entry name" value="AB_hydrolase_3"/>
</dbReference>
<dbReference type="InterPro" id="IPR029058">
    <property type="entry name" value="AB_hydrolase_fold"/>
</dbReference>
<dbReference type="InterPro" id="IPR023508">
    <property type="entry name" value="Acetyl_esterase"/>
</dbReference>
<dbReference type="InterPro" id="IPR050300">
    <property type="entry name" value="GDXG_lipolytic_enzyme"/>
</dbReference>
<dbReference type="InterPro" id="IPR002168">
    <property type="entry name" value="Lipase_GDXG_HIS_AS"/>
</dbReference>
<dbReference type="InterPro" id="IPR033140">
    <property type="entry name" value="Lipase_GDXG_put_SER_AS"/>
</dbReference>
<dbReference type="NCBIfam" id="NF007547">
    <property type="entry name" value="PRK10162.1"/>
    <property type="match status" value="1"/>
</dbReference>
<dbReference type="PANTHER" id="PTHR48081">
    <property type="entry name" value="AB HYDROLASE SUPERFAMILY PROTEIN C4A8.06C"/>
    <property type="match status" value="1"/>
</dbReference>
<dbReference type="PANTHER" id="PTHR48081:SF8">
    <property type="entry name" value="ALPHA_BETA HYDROLASE FOLD-3 DOMAIN-CONTAINING PROTEIN-RELATED"/>
    <property type="match status" value="1"/>
</dbReference>
<dbReference type="Pfam" id="PF07859">
    <property type="entry name" value="Abhydrolase_3"/>
    <property type="match status" value="1"/>
</dbReference>
<dbReference type="SUPFAM" id="SSF53474">
    <property type="entry name" value="alpha/beta-Hydrolases"/>
    <property type="match status" value="1"/>
</dbReference>
<dbReference type="PROSITE" id="PS01173">
    <property type="entry name" value="LIPASE_GDXG_HIS"/>
    <property type="match status" value="1"/>
</dbReference>
<dbReference type="PROSITE" id="PS01174">
    <property type="entry name" value="LIPASE_GDXG_SER"/>
    <property type="match status" value="1"/>
</dbReference>
<name>AES_SHIB3</name>
<reference key="1">
    <citation type="submission" date="2008-05" db="EMBL/GenBank/DDBJ databases">
        <title>Complete sequence of Shigella boydii serotype 18 strain BS512.</title>
        <authorList>
            <person name="Rasko D.A."/>
            <person name="Rosovitz M."/>
            <person name="Maurelli A.T."/>
            <person name="Myers G."/>
            <person name="Seshadri R."/>
            <person name="Cer R."/>
            <person name="Jiang L."/>
            <person name="Ravel J."/>
            <person name="Sebastian Y."/>
        </authorList>
    </citation>
    <scope>NUCLEOTIDE SEQUENCE [LARGE SCALE GENOMIC DNA]</scope>
    <source>
        <strain>CDC 3083-94 / BS512</strain>
    </source>
</reference>
<feature type="chain" id="PRO_1000188996" description="Acetyl esterase">
    <location>
        <begin position="1"/>
        <end position="319"/>
    </location>
</feature>
<feature type="short sequence motif" description="Involved in the stabilization of the negatively charged intermediate by the formation of the oxyanion hole" evidence="1">
    <location>
        <begin position="91"/>
        <end position="93"/>
    </location>
</feature>
<feature type="active site" evidence="2">
    <location>
        <position position="165"/>
    </location>
</feature>
<feature type="active site" evidence="2">
    <location>
        <position position="262"/>
    </location>
</feature>
<feature type="active site" evidence="2">
    <location>
        <position position="292"/>
    </location>
</feature>
<organism>
    <name type="scientific">Shigella boydii serotype 18 (strain CDC 3083-94 / BS512)</name>
    <dbReference type="NCBI Taxonomy" id="344609"/>
    <lineage>
        <taxon>Bacteria</taxon>
        <taxon>Pseudomonadati</taxon>
        <taxon>Pseudomonadota</taxon>
        <taxon>Gammaproteobacteria</taxon>
        <taxon>Enterobacterales</taxon>
        <taxon>Enterobacteriaceae</taxon>
        <taxon>Shigella</taxon>
    </lineage>
</organism>
<comment type="function">
    <text evidence="2">Displays esterase activity towards short chain fatty esters (acyl chain length of up to 8 carbons). Able to hydrolyze triacetylglycerol (triacetin) and tributyrylglycerol (tributyrin), but not trioleylglycerol (triolein) or cholesterol oleate. Negatively regulates MalT activity by antagonizing maltotriose binding. Inhibits MelA galactosidase activity.</text>
</comment>
<comment type="subunit">
    <text evidence="2">Homodimer. Interacts with MalT and MelA.</text>
</comment>
<comment type="subcellular location">
    <subcellularLocation>
        <location evidence="2">Cytoplasm</location>
    </subcellularLocation>
</comment>
<comment type="similarity">
    <text evidence="2">Belongs to the 'GDXG' lipolytic enzyme family.</text>
</comment>
<proteinExistence type="inferred from homology"/>
<protein>
    <recommendedName>
        <fullName evidence="2">Acetyl esterase</fullName>
        <ecNumber evidence="2">3.1.1.-</ecNumber>
    </recommendedName>
</protein>
<gene>
    <name evidence="2" type="primary">aes</name>
    <name type="ordered locus">SbBS512_E0407</name>
</gene>